<name>OHRL_STAAM</name>
<accession>Q99VH8</accession>
<sequence>MAIHYETKATNVGGRKGHVYTDDRALDIDIVPPAQADGKATNPEQLFAAGYASCFNGAFDLILKQNKVRDAHPEVTLTVRLEDDSDSESPKLSVSIDATIKNVISQEEAEKYLQMAHEFCPYSKATQGNINVDLNVNVVD</sequence>
<evidence type="ECO:0000305" key="1"/>
<organism>
    <name type="scientific">Staphylococcus aureus (strain Mu50 / ATCC 700699)</name>
    <dbReference type="NCBI Taxonomy" id="158878"/>
    <lineage>
        <taxon>Bacteria</taxon>
        <taxon>Bacillati</taxon>
        <taxon>Bacillota</taxon>
        <taxon>Bacilli</taxon>
        <taxon>Bacillales</taxon>
        <taxon>Staphylococcaceae</taxon>
        <taxon>Staphylococcus</taxon>
    </lineage>
</organism>
<dbReference type="EMBL" id="BA000017">
    <property type="protein sequence ID" value="BAB56990.1"/>
    <property type="molecule type" value="Genomic_DNA"/>
</dbReference>
<dbReference type="RefSeq" id="WP_000974460.1">
    <property type="nucleotide sequence ID" value="NC_002758.2"/>
</dbReference>
<dbReference type="SMR" id="Q99VH8"/>
<dbReference type="KEGG" id="sav:SAV0828"/>
<dbReference type="HOGENOM" id="CLU_106355_2_1_9"/>
<dbReference type="PhylomeDB" id="Q99VH8"/>
<dbReference type="Proteomes" id="UP000002481">
    <property type="component" value="Chromosome"/>
</dbReference>
<dbReference type="GO" id="GO:0006979">
    <property type="term" value="P:response to oxidative stress"/>
    <property type="evidence" value="ECO:0007669"/>
    <property type="project" value="InterPro"/>
</dbReference>
<dbReference type="Gene3D" id="2.20.25.10">
    <property type="match status" value="1"/>
</dbReference>
<dbReference type="Gene3D" id="3.30.300.20">
    <property type="match status" value="1"/>
</dbReference>
<dbReference type="InterPro" id="IPR015946">
    <property type="entry name" value="KH_dom-like_a/b"/>
</dbReference>
<dbReference type="InterPro" id="IPR019953">
    <property type="entry name" value="OHR"/>
</dbReference>
<dbReference type="InterPro" id="IPR003718">
    <property type="entry name" value="OsmC/Ohr_fam"/>
</dbReference>
<dbReference type="InterPro" id="IPR036102">
    <property type="entry name" value="OsmC/Ohrsf"/>
</dbReference>
<dbReference type="NCBIfam" id="TIGR03561">
    <property type="entry name" value="organ_hyd_perox"/>
    <property type="match status" value="1"/>
</dbReference>
<dbReference type="PANTHER" id="PTHR33797">
    <property type="entry name" value="ORGANIC HYDROPEROXIDE RESISTANCE PROTEIN-LIKE"/>
    <property type="match status" value="1"/>
</dbReference>
<dbReference type="PANTHER" id="PTHR33797:SF2">
    <property type="entry name" value="ORGANIC HYDROPEROXIDE RESISTANCE PROTEIN-LIKE"/>
    <property type="match status" value="1"/>
</dbReference>
<dbReference type="Pfam" id="PF02566">
    <property type="entry name" value="OsmC"/>
    <property type="match status" value="1"/>
</dbReference>
<dbReference type="SUPFAM" id="SSF82784">
    <property type="entry name" value="OsmC-like"/>
    <property type="match status" value="1"/>
</dbReference>
<gene>
    <name type="ordered locus">SAV0828</name>
</gene>
<feature type="chain" id="PRO_0000288958" description="Organic hydroperoxide resistance protein-like">
    <location>
        <begin position="1"/>
        <end position="140"/>
    </location>
</feature>
<proteinExistence type="inferred from homology"/>
<comment type="similarity">
    <text evidence="1">Belongs to the OsmC/Ohr family.</text>
</comment>
<reference key="1">
    <citation type="journal article" date="2001" name="Lancet">
        <title>Whole genome sequencing of meticillin-resistant Staphylococcus aureus.</title>
        <authorList>
            <person name="Kuroda M."/>
            <person name="Ohta T."/>
            <person name="Uchiyama I."/>
            <person name="Baba T."/>
            <person name="Yuzawa H."/>
            <person name="Kobayashi I."/>
            <person name="Cui L."/>
            <person name="Oguchi A."/>
            <person name="Aoki K."/>
            <person name="Nagai Y."/>
            <person name="Lian J.-Q."/>
            <person name="Ito T."/>
            <person name="Kanamori M."/>
            <person name="Matsumaru H."/>
            <person name="Maruyama A."/>
            <person name="Murakami H."/>
            <person name="Hosoyama A."/>
            <person name="Mizutani-Ui Y."/>
            <person name="Takahashi N.K."/>
            <person name="Sawano T."/>
            <person name="Inoue R."/>
            <person name="Kaito C."/>
            <person name="Sekimizu K."/>
            <person name="Hirakawa H."/>
            <person name="Kuhara S."/>
            <person name="Goto S."/>
            <person name="Yabuzaki J."/>
            <person name="Kanehisa M."/>
            <person name="Yamashita A."/>
            <person name="Oshima K."/>
            <person name="Furuya K."/>
            <person name="Yoshino C."/>
            <person name="Shiba T."/>
            <person name="Hattori M."/>
            <person name="Ogasawara N."/>
            <person name="Hayashi H."/>
            <person name="Hiramatsu K."/>
        </authorList>
    </citation>
    <scope>NUCLEOTIDE SEQUENCE [LARGE SCALE GENOMIC DNA]</scope>
    <source>
        <strain>Mu50 / ATCC 700699</strain>
    </source>
</reference>
<protein>
    <recommendedName>
        <fullName>Organic hydroperoxide resistance protein-like</fullName>
    </recommendedName>
</protein>